<evidence type="ECO:0000250" key="1">
    <source>
        <dbReference type="UniProtKB" id="P38820"/>
    </source>
</evidence>
<evidence type="ECO:0000255" key="2">
    <source>
        <dbReference type="HAMAP-Rule" id="MF_03049"/>
    </source>
</evidence>
<evidence type="ECO:0000256" key="3">
    <source>
        <dbReference type="SAM" id="MobiDB-lite"/>
    </source>
</evidence>
<proteinExistence type="inferred from homology"/>
<reference key="1">
    <citation type="journal article" date="2005" name="Nature">
        <title>The genome sequence of the rice blast fungus Magnaporthe grisea.</title>
        <authorList>
            <person name="Dean R.A."/>
            <person name="Talbot N.J."/>
            <person name="Ebbole D.J."/>
            <person name="Farman M.L."/>
            <person name="Mitchell T.K."/>
            <person name="Orbach M.J."/>
            <person name="Thon M.R."/>
            <person name="Kulkarni R."/>
            <person name="Xu J.-R."/>
            <person name="Pan H."/>
            <person name="Read N.D."/>
            <person name="Lee Y.-H."/>
            <person name="Carbone I."/>
            <person name="Brown D."/>
            <person name="Oh Y.Y."/>
            <person name="Donofrio N."/>
            <person name="Jeong J.S."/>
            <person name="Soanes D.M."/>
            <person name="Djonovic S."/>
            <person name="Kolomiets E."/>
            <person name="Rehmeyer C."/>
            <person name="Li W."/>
            <person name="Harding M."/>
            <person name="Kim S."/>
            <person name="Lebrun M.-H."/>
            <person name="Bohnert H."/>
            <person name="Coughlan S."/>
            <person name="Butler J."/>
            <person name="Calvo S.E."/>
            <person name="Ma L.-J."/>
            <person name="Nicol R."/>
            <person name="Purcell S."/>
            <person name="Nusbaum C."/>
            <person name="Galagan J.E."/>
            <person name="Birren B.W."/>
        </authorList>
    </citation>
    <scope>NUCLEOTIDE SEQUENCE [LARGE SCALE GENOMIC DNA]</scope>
    <source>
        <strain>70-15 / ATCC MYA-4617 / FGSC 8958</strain>
    </source>
</reference>
<comment type="function">
    <text evidence="2">Plays a central role in 2-thiolation of mcm(5)S(2)U at tRNA wobble positions of cytosolic tRNA(Lys), tRNA(Glu) and tRNA(Gln). Also essential during biosynthesis of the molybdenum cofactor. Acts by mediating the C-terminal thiocarboxylation of sulfur carriers URM1 and MOCS2A. Its N-terminus first activates urm1 and MOCS2A as acyl-adenylates (-COAMP), then the persulfide sulfur on the catalytic cysteine is transferred to URM1 and MOCS2A to form thiocarboxylation (-COSH) of their C-terminus. The reaction probably involves hydrogen sulfide that is generated from the persulfide intermediate and that acts as a nucleophile towards URM1 and MOCS2A. Subsequently, a transient disulfide bond is formed. Does not use thiosulfate as sulfur donor; NFS1 probably acting as a sulfur donor for thiocarboxylation reactions.</text>
</comment>
<comment type="catalytic activity">
    <reaction evidence="2">
        <text>[molybdopterin-synthase sulfur-carrier protein]-C-terminal Gly-Gly + ATP + H(+) = [molybdopterin-synthase sulfur-carrier protein]-C-terminal Gly-Gly-AMP + diphosphate</text>
        <dbReference type="Rhea" id="RHEA:43616"/>
        <dbReference type="Rhea" id="RHEA-COMP:12159"/>
        <dbReference type="Rhea" id="RHEA-COMP:12202"/>
        <dbReference type="ChEBI" id="CHEBI:15378"/>
        <dbReference type="ChEBI" id="CHEBI:30616"/>
        <dbReference type="ChEBI" id="CHEBI:33019"/>
        <dbReference type="ChEBI" id="CHEBI:90618"/>
        <dbReference type="ChEBI" id="CHEBI:90778"/>
        <dbReference type="EC" id="2.7.7.80"/>
    </reaction>
</comment>
<comment type="catalytic activity">
    <reaction evidence="2">
        <text>[molybdopterin-synthase sulfur-carrier protein]-C-terminal Gly-Gly-AMP + S-sulfanyl-L-cysteinyl-[cysteine desulfurase] + AH2 = [molybdopterin-synthase sulfur-carrier protein]-C-terminal-Gly-aminoethanethioate + L-cysteinyl-[cysteine desulfurase] + A + AMP + 2 H(+)</text>
        <dbReference type="Rhea" id="RHEA:48612"/>
        <dbReference type="Rhea" id="RHEA-COMP:12157"/>
        <dbReference type="Rhea" id="RHEA-COMP:12158"/>
        <dbReference type="Rhea" id="RHEA-COMP:12159"/>
        <dbReference type="Rhea" id="RHEA-COMP:19907"/>
        <dbReference type="ChEBI" id="CHEBI:13193"/>
        <dbReference type="ChEBI" id="CHEBI:15378"/>
        <dbReference type="ChEBI" id="CHEBI:17499"/>
        <dbReference type="ChEBI" id="CHEBI:29950"/>
        <dbReference type="ChEBI" id="CHEBI:61963"/>
        <dbReference type="ChEBI" id="CHEBI:90618"/>
        <dbReference type="ChEBI" id="CHEBI:232372"/>
        <dbReference type="ChEBI" id="CHEBI:456215"/>
        <dbReference type="EC" id="2.8.1.11"/>
    </reaction>
</comment>
<comment type="cofactor">
    <cofactor evidence="2">
        <name>Zn(2+)</name>
        <dbReference type="ChEBI" id="CHEBI:29105"/>
    </cofactor>
    <text evidence="2">Binds 1 zinc ion per subunit.</text>
</comment>
<comment type="pathway">
    <text evidence="2">tRNA modification; 5-methoxycarbonylmethyl-2-thiouridine-tRNA biosynthesis.</text>
</comment>
<comment type="subcellular location">
    <subcellularLocation>
        <location evidence="1">Cytoplasm</location>
        <location evidence="1">Cytosol</location>
    </subcellularLocation>
</comment>
<comment type="similarity">
    <text evidence="2">In the N-terminal section; belongs to the HesA/MoeB/ThiF family. UBA4 subfamily.</text>
</comment>
<protein>
    <recommendedName>
        <fullName evidence="2">Adenylyltransferase and sulfurtransferase uba4</fullName>
    </recommendedName>
    <alternativeName>
        <fullName evidence="2">Common component for nitrate reductase and xanthine dehydrogenase protein F</fullName>
    </alternativeName>
    <alternativeName>
        <fullName evidence="2">Ubiquitin-like protein activator 4</fullName>
    </alternativeName>
    <domain>
        <recommendedName>
            <fullName evidence="2">Molybdopterin-synthase adenylyltransferase</fullName>
            <ecNumber evidence="2">2.7.7.80</ecNumber>
        </recommendedName>
        <alternativeName>
            <fullName evidence="2">Adenylyltransferase uba4</fullName>
        </alternativeName>
        <alternativeName>
            <fullName evidence="2">Sulfur carrier protein MOCS2A adenylyltransferase</fullName>
        </alternativeName>
    </domain>
    <domain>
        <recommendedName>
            <fullName evidence="2">Molybdopterin-synthase sulfurtransferase</fullName>
            <ecNumber evidence="2">2.8.1.11</ecNumber>
        </recommendedName>
        <alternativeName>
            <fullName evidence="2">Sulfur carrier protein MOCS2A sulfurtransferase</fullName>
        </alternativeName>
        <alternativeName>
            <fullName evidence="2">Sulfurtransferase uba4</fullName>
        </alternativeName>
    </domain>
</protein>
<sequence>MEEADKRAEELRAQIAECEATLQSLKEQLAAAEAAKTPPYSDSTETDRGSSSSTWKWPLAEAEYERYGRQLILPSVGIQGQLRLKAASVLIVGAGGLGCPASAYFAGAGVGTIGLVDGDTVEASNLHRQVAHGTSRVGMLKVDSAISYLRELNPLVKYNAHQSHLTPENAESIVSGYDLVLDCTDHPTSRYLISDVCVLLRKPLVSASALRTDGQLIVLNTPAAPQADLSGGPCYRCVFPKPPPPDAVTSCGEGGILGPVVGVMGVLQALEGIRLLAAGRHLSPSPEQQQTAISPSLLLFSAPPDGSPAGFRSVRMRGRRKDCFACGEKSALSLATLREGGLDYVQFCGGSRKPVALLKSEERVSAEQLNALLQQQAGEHGKPVLLDVREREHFEIANIPGAINIPFSKTQNPGARHNAEDTPKLDWLPDGVADGHSPVYVVCRVGNDSQTVARQLKEFGLDNQGKRFIGDVKGGMLAWKREVDSTLPFM</sequence>
<name>UBA4_PYRO7</name>
<feature type="chain" id="PRO_0000369229" description="Adenylyltransferase and sulfurtransferase uba4">
    <location>
        <begin position="1"/>
        <end position="490"/>
    </location>
</feature>
<feature type="domain" description="Rhodanese" evidence="2">
    <location>
        <begin position="379"/>
        <end position="488"/>
    </location>
</feature>
<feature type="region of interest" description="Disordered" evidence="3">
    <location>
        <begin position="33"/>
        <end position="54"/>
    </location>
</feature>
<feature type="active site" description="Glycyl thioester intermediate; for adenylyltransferase activity" evidence="2">
    <location>
        <position position="251"/>
    </location>
</feature>
<feature type="active site" description="Cysteine persulfide intermediate; for sulfurtransferase activity" evidence="2">
    <location>
        <position position="443"/>
    </location>
</feature>
<feature type="binding site" evidence="2">
    <location>
        <position position="96"/>
    </location>
    <ligand>
        <name>ATP</name>
        <dbReference type="ChEBI" id="CHEBI:30616"/>
    </ligand>
</feature>
<feature type="binding site" evidence="2">
    <location>
        <position position="117"/>
    </location>
    <ligand>
        <name>ATP</name>
        <dbReference type="ChEBI" id="CHEBI:30616"/>
    </ligand>
</feature>
<feature type="binding site" evidence="2">
    <location>
        <begin position="124"/>
        <end position="128"/>
    </location>
    <ligand>
        <name>ATP</name>
        <dbReference type="ChEBI" id="CHEBI:30616"/>
    </ligand>
</feature>
<feature type="binding site" evidence="2">
    <location>
        <position position="141"/>
    </location>
    <ligand>
        <name>ATP</name>
        <dbReference type="ChEBI" id="CHEBI:30616"/>
    </ligand>
</feature>
<feature type="binding site" evidence="2">
    <location>
        <begin position="185"/>
        <end position="186"/>
    </location>
    <ligand>
        <name>ATP</name>
        <dbReference type="ChEBI" id="CHEBI:30616"/>
    </ligand>
</feature>
<feature type="binding site" evidence="2">
    <location>
        <position position="234"/>
    </location>
    <ligand>
        <name>Zn(2+)</name>
        <dbReference type="ChEBI" id="CHEBI:29105"/>
    </ligand>
</feature>
<feature type="binding site" evidence="2">
    <location>
        <position position="237"/>
    </location>
    <ligand>
        <name>Zn(2+)</name>
        <dbReference type="ChEBI" id="CHEBI:29105"/>
    </ligand>
</feature>
<feature type="binding site" evidence="2">
    <location>
        <position position="323"/>
    </location>
    <ligand>
        <name>Zn(2+)</name>
        <dbReference type="ChEBI" id="CHEBI:29105"/>
    </ligand>
</feature>
<feature type="binding site" evidence="2">
    <location>
        <position position="326"/>
    </location>
    <ligand>
        <name>Zn(2+)</name>
        <dbReference type="ChEBI" id="CHEBI:29105"/>
    </ligand>
</feature>
<keyword id="KW-0067">ATP-binding</keyword>
<keyword id="KW-0963">Cytoplasm</keyword>
<keyword id="KW-0479">Metal-binding</keyword>
<keyword id="KW-0501">Molybdenum cofactor biosynthesis</keyword>
<keyword id="KW-0511">Multifunctional enzyme</keyword>
<keyword id="KW-0547">Nucleotide-binding</keyword>
<keyword id="KW-0548">Nucleotidyltransferase</keyword>
<keyword id="KW-1185">Reference proteome</keyword>
<keyword id="KW-0808">Transferase</keyword>
<keyword id="KW-0819">tRNA processing</keyword>
<keyword id="KW-0833">Ubl conjugation pathway</keyword>
<keyword id="KW-0862">Zinc</keyword>
<gene>
    <name evidence="2" type="primary">UBA4</name>
    <name type="synonym">CNXF</name>
    <name type="ORF">MGG_05569</name>
</gene>
<organism>
    <name type="scientific">Pyricularia oryzae (strain 70-15 / ATCC MYA-4617 / FGSC 8958)</name>
    <name type="common">Rice blast fungus</name>
    <name type="synonym">Magnaporthe oryzae</name>
    <dbReference type="NCBI Taxonomy" id="242507"/>
    <lineage>
        <taxon>Eukaryota</taxon>
        <taxon>Fungi</taxon>
        <taxon>Dikarya</taxon>
        <taxon>Ascomycota</taxon>
        <taxon>Pezizomycotina</taxon>
        <taxon>Sordariomycetes</taxon>
        <taxon>Sordariomycetidae</taxon>
        <taxon>Magnaporthales</taxon>
        <taxon>Pyriculariaceae</taxon>
        <taxon>Pyricularia</taxon>
    </lineage>
</organism>
<dbReference type="EC" id="2.7.7.80" evidence="2"/>
<dbReference type="EC" id="2.8.1.11" evidence="2"/>
<dbReference type="EMBL" id="CM001231">
    <property type="protein sequence ID" value="EHA57832.1"/>
    <property type="molecule type" value="Genomic_DNA"/>
</dbReference>
<dbReference type="RefSeq" id="XP_003710444.1">
    <property type="nucleotide sequence ID" value="XM_003710396.1"/>
</dbReference>
<dbReference type="SMR" id="A4RPM5"/>
<dbReference type="FunCoup" id="A4RPM5">
    <property type="interactions" value="844"/>
</dbReference>
<dbReference type="STRING" id="242507.A4RPM5"/>
<dbReference type="EnsemblFungi" id="MGG_05569T0">
    <property type="protein sequence ID" value="MGG_05569T0"/>
    <property type="gene ID" value="MGG_05569"/>
</dbReference>
<dbReference type="GeneID" id="2676070"/>
<dbReference type="KEGG" id="mgr:MGG_05569"/>
<dbReference type="VEuPathDB" id="FungiDB:MGG_05569"/>
<dbReference type="eggNOG" id="KOG2017">
    <property type="taxonomic scope" value="Eukaryota"/>
</dbReference>
<dbReference type="HOGENOM" id="CLU_013325_1_2_1"/>
<dbReference type="InParanoid" id="A4RPM5"/>
<dbReference type="OMA" id="IPDVGMD"/>
<dbReference type="OrthoDB" id="10261062at2759"/>
<dbReference type="UniPathway" id="UPA00988"/>
<dbReference type="Proteomes" id="UP000009058">
    <property type="component" value="Chromosome 1"/>
</dbReference>
<dbReference type="GO" id="GO:0005829">
    <property type="term" value="C:cytosol"/>
    <property type="evidence" value="ECO:0007669"/>
    <property type="project" value="InterPro"/>
</dbReference>
<dbReference type="GO" id="GO:0070733">
    <property type="term" value="F:AMPylase activity"/>
    <property type="evidence" value="ECO:0007669"/>
    <property type="project" value="EnsemblFungi"/>
</dbReference>
<dbReference type="GO" id="GO:0005524">
    <property type="term" value="F:ATP binding"/>
    <property type="evidence" value="ECO:0007669"/>
    <property type="project" value="UniProtKB-KW"/>
</dbReference>
<dbReference type="GO" id="GO:0042802">
    <property type="term" value="F:identical protein binding"/>
    <property type="evidence" value="ECO:0007669"/>
    <property type="project" value="EnsemblFungi"/>
</dbReference>
<dbReference type="GO" id="GO:0046872">
    <property type="term" value="F:metal ion binding"/>
    <property type="evidence" value="ECO:0007669"/>
    <property type="project" value="UniProtKB-KW"/>
</dbReference>
<dbReference type="GO" id="GO:0061605">
    <property type="term" value="F:molybdopterin-synthase adenylyltransferase activity"/>
    <property type="evidence" value="ECO:0007669"/>
    <property type="project" value="UniProtKB-EC"/>
</dbReference>
<dbReference type="GO" id="GO:0061604">
    <property type="term" value="F:molybdopterin-synthase sulfurtransferase activity"/>
    <property type="evidence" value="ECO:0007669"/>
    <property type="project" value="UniProtKB-EC"/>
</dbReference>
<dbReference type="GO" id="GO:0004792">
    <property type="term" value="F:thiosulfate-cyanide sulfurtransferase activity"/>
    <property type="evidence" value="ECO:0007669"/>
    <property type="project" value="EnsemblFungi"/>
</dbReference>
<dbReference type="GO" id="GO:0042292">
    <property type="term" value="F:URM1 activating enzyme activity"/>
    <property type="evidence" value="ECO:0007669"/>
    <property type="project" value="EnsemblFungi"/>
</dbReference>
<dbReference type="GO" id="GO:0007114">
    <property type="term" value="P:cell budding"/>
    <property type="evidence" value="ECO:0007669"/>
    <property type="project" value="EnsemblFungi"/>
</dbReference>
<dbReference type="GO" id="GO:0034599">
    <property type="term" value="P:cellular response to oxidative stress"/>
    <property type="evidence" value="ECO:0007669"/>
    <property type="project" value="EnsemblFungi"/>
</dbReference>
<dbReference type="GO" id="GO:0001403">
    <property type="term" value="P:invasive growth in response to glucose limitation"/>
    <property type="evidence" value="ECO:0007669"/>
    <property type="project" value="EnsemblFungi"/>
</dbReference>
<dbReference type="GO" id="GO:0006777">
    <property type="term" value="P:Mo-molybdopterin cofactor biosynthetic process"/>
    <property type="evidence" value="ECO:0007669"/>
    <property type="project" value="UniProtKB-UniRule"/>
</dbReference>
<dbReference type="GO" id="GO:0032447">
    <property type="term" value="P:protein urmylation"/>
    <property type="evidence" value="ECO:0007669"/>
    <property type="project" value="EnsemblFungi"/>
</dbReference>
<dbReference type="GO" id="GO:2000220">
    <property type="term" value="P:regulation of pseudohyphal growth"/>
    <property type="evidence" value="ECO:0007669"/>
    <property type="project" value="EnsemblFungi"/>
</dbReference>
<dbReference type="GO" id="GO:0002143">
    <property type="term" value="P:tRNA wobble position uridine thiolation"/>
    <property type="evidence" value="ECO:0007669"/>
    <property type="project" value="EnsemblFungi"/>
</dbReference>
<dbReference type="CDD" id="cd01526">
    <property type="entry name" value="RHOD_ThiF"/>
    <property type="match status" value="1"/>
</dbReference>
<dbReference type="CDD" id="cd00757">
    <property type="entry name" value="ThiF_MoeB_HesA_family"/>
    <property type="match status" value="1"/>
</dbReference>
<dbReference type="FunFam" id="3.40.50.720:FF:000033">
    <property type="entry name" value="Adenylyltransferase and sulfurtransferase MOCS3"/>
    <property type="match status" value="1"/>
</dbReference>
<dbReference type="Gene3D" id="3.40.50.720">
    <property type="entry name" value="NAD(P)-binding Rossmann-like Domain"/>
    <property type="match status" value="1"/>
</dbReference>
<dbReference type="Gene3D" id="3.40.250.10">
    <property type="entry name" value="Rhodanese-like domain"/>
    <property type="match status" value="1"/>
</dbReference>
<dbReference type="HAMAP" id="MF_03049">
    <property type="entry name" value="MOCS3_Uba4"/>
    <property type="match status" value="1"/>
</dbReference>
<dbReference type="InterPro" id="IPR028885">
    <property type="entry name" value="MOCS3/Uba4"/>
</dbReference>
<dbReference type="InterPro" id="IPR001763">
    <property type="entry name" value="Rhodanese-like_dom"/>
</dbReference>
<dbReference type="InterPro" id="IPR036873">
    <property type="entry name" value="Rhodanese-like_dom_sf"/>
</dbReference>
<dbReference type="InterPro" id="IPR045886">
    <property type="entry name" value="ThiF/MoeB/HesA"/>
</dbReference>
<dbReference type="InterPro" id="IPR000594">
    <property type="entry name" value="ThiF_NAD_FAD-bd"/>
</dbReference>
<dbReference type="InterPro" id="IPR035985">
    <property type="entry name" value="Ubiquitin-activating_enz"/>
</dbReference>
<dbReference type="PANTHER" id="PTHR10953:SF102">
    <property type="entry name" value="ADENYLYLTRANSFERASE AND SULFURTRANSFERASE MOCS3"/>
    <property type="match status" value="1"/>
</dbReference>
<dbReference type="PANTHER" id="PTHR10953">
    <property type="entry name" value="UBIQUITIN-ACTIVATING ENZYME E1"/>
    <property type="match status" value="1"/>
</dbReference>
<dbReference type="Pfam" id="PF00581">
    <property type="entry name" value="Rhodanese"/>
    <property type="match status" value="1"/>
</dbReference>
<dbReference type="Pfam" id="PF00899">
    <property type="entry name" value="ThiF"/>
    <property type="match status" value="1"/>
</dbReference>
<dbReference type="SMART" id="SM00450">
    <property type="entry name" value="RHOD"/>
    <property type="match status" value="1"/>
</dbReference>
<dbReference type="SUPFAM" id="SSF69572">
    <property type="entry name" value="Activating enzymes of the ubiquitin-like proteins"/>
    <property type="match status" value="1"/>
</dbReference>
<dbReference type="PROSITE" id="PS50206">
    <property type="entry name" value="RHODANESE_3"/>
    <property type="match status" value="1"/>
</dbReference>
<accession>A4RPM5</accession>
<accession>G4MMR0</accession>